<comment type="function">
    <text evidence="1">ATP-dependent specificity component of the ClpAP protease. It directs the protease to specific substrates. It has unfoldase activity. The primary function of the ClpA-ClpP complex appears to be the degradation of unfolded or abnormal proteins (By similarity).</text>
</comment>
<comment type="subunit">
    <text evidence="1">Component of the ClpAP complex composed of six ClpA subunits assembled into a hexameric ring in the presence of ATP, and fourteen ClpP subunits arranged in two heptameric rings. Binds to ClpS (By similarity).</text>
</comment>
<comment type="similarity">
    <text evidence="5">Belongs to the ClpA/ClpB family.</text>
</comment>
<proteinExistence type="inferred from homology"/>
<protein>
    <recommendedName>
        <fullName>ATP-dependent Clp protease ATP-binding subunit ClpA</fullName>
    </recommendedName>
</protein>
<name>CLPA_ECO57</name>
<reference key="1">
    <citation type="journal article" date="2001" name="Nature">
        <title>Genome sequence of enterohaemorrhagic Escherichia coli O157:H7.</title>
        <authorList>
            <person name="Perna N.T."/>
            <person name="Plunkett G. III"/>
            <person name="Burland V."/>
            <person name="Mau B."/>
            <person name="Glasner J.D."/>
            <person name="Rose D.J."/>
            <person name="Mayhew G.F."/>
            <person name="Evans P.S."/>
            <person name="Gregor J."/>
            <person name="Kirkpatrick H.A."/>
            <person name="Posfai G."/>
            <person name="Hackett J."/>
            <person name="Klink S."/>
            <person name="Boutin A."/>
            <person name="Shao Y."/>
            <person name="Miller L."/>
            <person name="Grotbeck E.J."/>
            <person name="Davis N.W."/>
            <person name="Lim A."/>
            <person name="Dimalanta E.T."/>
            <person name="Potamousis K."/>
            <person name="Apodaca J."/>
            <person name="Anantharaman T.S."/>
            <person name="Lin J."/>
            <person name="Yen G."/>
            <person name="Schwartz D.C."/>
            <person name="Welch R.A."/>
            <person name="Blattner F.R."/>
        </authorList>
    </citation>
    <scope>NUCLEOTIDE SEQUENCE [LARGE SCALE GENOMIC DNA]</scope>
    <source>
        <strain>O157:H7 / EDL933 / ATCC 700927 / EHEC</strain>
    </source>
</reference>
<reference key="2">
    <citation type="journal article" date="2001" name="DNA Res.">
        <title>Complete genome sequence of enterohemorrhagic Escherichia coli O157:H7 and genomic comparison with a laboratory strain K-12.</title>
        <authorList>
            <person name="Hayashi T."/>
            <person name="Makino K."/>
            <person name="Ohnishi M."/>
            <person name="Kurokawa K."/>
            <person name="Ishii K."/>
            <person name="Yokoyama K."/>
            <person name="Han C.-G."/>
            <person name="Ohtsubo E."/>
            <person name="Nakayama K."/>
            <person name="Murata T."/>
            <person name="Tanaka M."/>
            <person name="Tobe T."/>
            <person name="Iida T."/>
            <person name="Takami H."/>
            <person name="Honda T."/>
            <person name="Sasakawa C."/>
            <person name="Ogasawara N."/>
            <person name="Yasunaga T."/>
            <person name="Kuhara S."/>
            <person name="Shiba T."/>
            <person name="Hattori M."/>
            <person name="Shinagawa H."/>
        </authorList>
    </citation>
    <scope>NUCLEOTIDE SEQUENCE [LARGE SCALE GENOMIC DNA]</scope>
    <source>
        <strain>O157:H7 / Sakai / RIMD 0509952 / EHEC</strain>
    </source>
</reference>
<feature type="chain" id="PRO_0000191080" description="ATP-dependent Clp protease ATP-binding subunit ClpA">
    <location>
        <begin position="1"/>
        <end position="758"/>
    </location>
</feature>
<feature type="domain" description="Clp R" evidence="3">
    <location>
        <begin position="1"/>
        <end position="145"/>
    </location>
</feature>
<feature type="region of interest" description="Repeat 1" evidence="3">
    <location>
        <begin position="2"/>
        <end position="65"/>
    </location>
</feature>
<feature type="region of interest" description="Repeat 2" evidence="3">
    <location>
        <begin position="80"/>
        <end position="145"/>
    </location>
</feature>
<feature type="region of interest" description="Disordered" evidence="4">
    <location>
        <begin position="140"/>
        <end position="167"/>
    </location>
</feature>
<feature type="region of interest" description="I">
    <location>
        <begin position="169"/>
        <end position="417"/>
    </location>
</feature>
<feature type="region of interest" description="II">
    <location>
        <begin position="421"/>
        <end position="609"/>
    </location>
</feature>
<feature type="compositionally biased region" description="Polar residues" evidence="4">
    <location>
        <begin position="148"/>
        <end position="161"/>
    </location>
</feature>
<feature type="binding site" evidence="2">
    <location>
        <begin position="214"/>
        <end position="221"/>
    </location>
    <ligand>
        <name>ATP</name>
        <dbReference type="ChEBI" id="CHEBI:30616"/>
    </ligand>
</feature>
<feature type="binding site" evidence="2">
    <location>
        <begin position="495"/>
        <end position="502"/>
    </location>
    <ligand>
        <name>ATP</name>
        <dbReference type="ChEBI" id="CHEBI:30616"/>
    </ligand>
</feature>
<dbReference type="EMBL" id="AE005174">
    <property type="protein sequence ID" value="AAG55264.1"/>
    <property type="molecule type" value="Genomic_DNA"/>
</dbReference>
<dbReference type="EMBL" id="BA000007">
    <property type="protein sequence ID" value="BAB34391.1"/>
    <property type="molecule type" value="Genomic_DNA"/>
</dbReference>
<dbReference type="PIR" id="D85600">
    <property type="entry name" value="D85600"/>
</dbReference>
<dbReference type="PIR" id="H90749">
    <property type="entry name" value="H90749"/>
</dbReference>
<dbReference type="RefSeq" id="NP_308995.1">
    <property type="nucleotide sequence ID" value="NC_002695.1"/>
</dbReference>
<dbReference type="RefSeq" id="WP_000934041.1">
    <property type="nucleotide sequence ID" value="NZ_VOAI01000006.1"/>
</dbReference>
<dbReference type="SMR" id="P0ABI1"/>
<dbReference type="STRING" id="155864.Z1119"/>
<dbReference type="GeneID" id="917711"/>
<dbReference type="GeneID" id="93776538"/>
<dbReference type="KEGG" id="ece:Z1119"/>
<dbReference type="KEGG" id="ecs:ECs_0968"/>
<dbReference type="PATRIC" id="fig|386585.9.peg.1084"/>
<dbReference type="eggNOG" id="COG0542">
    <property type="taxonomic scope" value="Bacteria"/>
</dbReference>
<dbReference type="HOGENOM" id="CLU_005070_4_2_6"/>
<dbReference type="OMA" id="YDKSMGA"/>
<dbReference type="Proteomes" id="UP000000558">
    <property type="component" value="Chromosome"/>
</dbReference>
<dbReference type="Proteomes" id="UP000002519">
    <property type="component" value="Chromosome"/>
</dbReference>
<dbReference type="GO" id="GO:0005737">
    <property type="term" value="C:cytoplasm"/>
    <property type="evidence" value="ECO:0007669"/>
    <property type="project" value="TreeGrafter"/>
</dbReference>
<dbReference type="GO" id="GO:0005524">
    <property type="term" value="F:ATP binding"/>
    <property type="evidence" value="ECO:0007669"/>
    <property type="project" value="UniProtKB-KW"/>
</dbReference>
<dbReference type="GO" id="GO:0016887">
    <property type="term" value="F:ATP hydrolysis activity"/>
    <property type="evidence" value="ECO:0007669"/>
    <property type="project" value="InterPro"/>
</dbReference>
<dbReference type="GO" id="GO:0034605">
    <property type="term" value="P:cellular response to heat"/>
    <property type="evidence" value="ECO:0007669"/>
    <property type="project" value="TreeGrafter"/>
</dbReference>
<dbReference type="GO" id="GO:0043335">
    <property type="term" value="P:protein unfolding"/>
    <property type="evidence" value="ECO:0007669"/>
    <property type="project" value="InterPro"/>
</dbReference>
<dbReference type="CDD" id="cd00009">
    <property type="entry name" value="AAA"/>
    <property type="match status" value="1"/>
</dbReference>
<dbReference type="CDD" id="cd19499">
    <property type="entry name" value="RecA-like_ClpB_Hsp104-like"/>
    <property type="match status" value="1"/>
</dbReference>
<dbReference type="FunFam" id="1.10.8.60:FF:000011">
    <property type="entry name" value="ATP-dependent Clp protease ATP-binding subunit"/>
    <property type="match status" value="1"/>
</dbReference>
<dbReference type="FunFam" id="1.10.1780.10:FF:000002">
    <property type="entry name" value="ATP-dependent Clp protease ATP-binding subunit ClpA"/>
    <property type="match status" value="1"/>
</dbReference>
<dbReference type="FunFam" id="3.40.50.300:FF:000271">
    <property type="entry name" value="ATP-dependent Clp protease ATP-binding subunit ClpA"/>
    <property type="match status" value="1"/>
</dbReference>
<dbReference type="FunFam" id="3.40.50.300:FF:000268">
    <property type="entry name" value="ATP-dependent Clp protease, ATP-binding subunit ClpA"/>
    <property type="match status" value="1"/>
</dbReference>
<dbReference type="Gene3D" id="1.10.8.60">
    <property type="match status" value="2"/>
</dbReference>
<dbReference type="Gene3D" id="1.10.1780.10">
    <property type="entry name" value="Clp, N-terminal domain"/>
    <property type="match status" value="1"/>
</dbReference>
<dbReference type="Gene3D" id="3.40.50.300">
    <property type="entry name" value="P-loop containing nucleotide triphosphate hydrolases"/>
    <property type="match status" value="2"/>
</dbReference>
<dbReference type="InterPro" id="IPR003593">
    <property type="entry name" value="AAA+_ATPase"/>
</dbReference>
<dbReference type="InterPro" id="IPR003959">
    <property type="entry name" value="ATPase_AAA_core"/>
</dbReference>
<dbReference type="InterPro" id="IPR019489">
    <property type="entry name" value="Clp_ATPase_C"/>
</dbReference>
<dbReference type="InterPro" id="IPR036628">
    <property type="entry name" value="Clp_N_dom_sf"/>
</dbReference>
<dbReference type="InterPro" id="IPR004176">
    <property type="entry name" value="Clp_R_dom"/>
</dbReference>
<dbReference type="InterPro" id="IPR013461">
    <property type="entry name" value="ClpA"/>
</dbReference>
<dbReference type="InterPro" id="IPR001270">
    <property type="entry name" value="ClpA/B"/>
</dbReference>
<dbReference type="InterPro" id="IPR018368">
    <property type="entry name" value="ClpA/B_CS1"/>
</dbReference>
<dbReference type="InterPro" id="IPR028299">
    <property type="entry name" value="ClpA/B_CS2"/>
</dbReference>
<dbReference type="InterPro" id="IPR041546">
    <property type="entry name" value="ClpA/ClpB_AAA_lid"/>
</dbReference>
<dbReference type="InterPro" id="IPR050130">
    <property type="entry name" value="ClpA_ClpB"/>
</dbReference>
<dbReference type="InterPro" id="IPR027417">
    <property type="entry name" value="P-loop_NTPase"/>
</dbReference>
<dbReference type="NCBIfam" id="TIGR02639">
    <property type="entry name" value="ClpA"/>
    <property type="match status" value="1"/>
</dbReference>
<dbReference type="NCBIfam" id="NF008263">
    <property type="entry name" value="PRK11034.1"/>
    <property type="match status" value="1"/>
</dbReference>
<dbReference type="PANTHER" id="PTHR11638">
    <property type="entry name" value="ATP-DEPENDENT CLP PROTEASE"/>
    <property type="match status" value="1"/>
</dbReference>
<dbReference type="PANTHER" id="PTHR11638:SF111">
    <property type="entry name" value="ATP-DEPENDENT CLP PROTEASE ATP-BINDING SUBUNIT CLPA"/>
    <property type="match status" value="1"/>
</dbReference>
<dbReference type="Pfam" id="PF00004">
    <property type="entry name" value="AAA"/>
    <property type="match status" value="1"/>
</dbReference>
<dbReference type="Pfam" id="PF07724">
    <property type="entry name" value="AAA_2"/>
    <property type="match status" value="1"/>
</dbReference>
<dbReference type="Pfam" id="PF17871">
    <property type="entry name" value="AAA_lid_9"/>
    <property type="match status" value="1"/>
</dbReference>
<dbReference type="Pfam" id="PF02861">
    <property type="entry name" value="Clp_N"/>
    <property type="match status" value="1"/>
</dbReference>
<dbReference type="Pfam" id="PF10431">
    <property type="entry name" value="ClpB_D2-small"/>
    <property type="match status" value="1"/>
</dbReference>
<dbReference type="PRINTS" id="PR00300">
    <property type="entry name" value="CLPPROTEASEA"/>
</dbReference>
<dbReference type="SMART" id="SM00382">
    <property type="entry name" value="AAA"/>
    <property type="match status" value="2"/>
</dbReference>
<dbReference type="SMART" id="SM01086">
    <property type="entry name" value="ClpB_D2-small"/>
    <property type="match status" value="1"/>
</dbReference>
<dbReference type="SUPFAM" id="SSF81923">
    <property type="entry name" value="Double Clp-N motif"/>
    <property type="match status" value="1"/>
</dbReference>
<dbReference type="SUPFAM" id="SSF52540">
    <property type="entry name" value="P-loop containing nucleoside triphosphate hydrolases"/>
    <property type="match status" value="2"/>
</dbReference>
<dbReference type="PROSITE" id="PS51903">
    <property type="entry name" value="CLP_R"/>
    <property type="match status" value="1"/>
</dbReference>
<dbReference type="PROSITE" id="PS00870">
    <property type="entry name" value="CLPAB_1"/>
    <property type="match status" value="1"/>
</dbReference>
<dbReference type="PROSITE" id="PS00871">
    <property type="entry name" value="CLPAB_2"/>
    <property type="match status" value="1"/>
</dbReference>
<gene>
    <name type="primary">clpA</name>
    <name type="ordered locus">Z1119</name>
    <name type="ordered locus">ECs0968</name>
</gene>
<sequence length="758" mass="84207">MLNQELELSLNMAFARAREHRHEFMTVEHLLLALLSNPSAREALEACSVDLVALRQELEAFIEQTTPVLPASEEERDTQPTLSFQRVLQRAVFHVQSSGRNEVTGANVLVAIFSEQESQAAYLLRKHEVSRLDVVNFISHGTRKDEPTQSSDPGSQPNSEEQAGGEERMENFTTNLNQLARVGGIDPLIGREKELERAIQVLCRRRKNNPLLVGESGVGKTAIAEGLAWRIVQGDVPEVMADCTIYSLDIGSLLAGTKYRGDFEKRFKALLKQLEQDTNSILFIDEIHTIIGAGAASGGQVDAANLIKPLLSSGKIRVIGSTTYQEFSNIFEKDRALARRFQKIDITEPSIEETVQIINGLKPKYEAHHDVRYTAKAVRAAVELAVKYINDRHLPDKAIDVIDEAGARARLMPVSKRKKTVNVADIESVVARIARIPEKSVSQSDRDTLKNLGDRLKMLVFGQDKAIEALTEAIKMARAGLGHEHKPVGSFLFAGPTGVGKTEVTVQLSKALGIELLRFDMSEYMERHTVSRLIGAPPGYVGFDQGGLLTDAVIKHPHAVLLLDEIEKAHPDVFNILLQVMDNGTLTDNNGRKADFRNVVLVMTTNAGVRETERKSIGLIHQDNSTDAMEEIKKIFTPEFRNRLDNIIWFDHLSTDVIHQVVDKFIVELQVQLDQKGVSLEVSQEARNWLAEKGYDRAMGARPMARVIQDNLKKPLANELLFGSLVDGGQVTVALDKEKNELTYGFQSAQKHKAEAAH</sequence>
<evidence type="ECO:0000250" key="1"/>
<evidence type="ECO:0000255" key="2"/>
<evidence type="ECO:0000255" key="3">
    <source>
        <dbReference type="PROSITE-ProRule" id="PRU01251"/>
    </source>
</evidence>
<evidence type="ECO:0000256" key="4">
    <source>
        <dbReference type="SAM" id="MobiDB-lite"/>
    </source>
</evidence>
<evidence type="ECO:0000305" key="5"/>
<keyword id="KW-0067">ATP-binding</keyword>
<keyword id="KW-0143">Chaperone</keyword>
<keyword id="KW-0547">Nucleotide-binding</keyword>
<keyword id="KW-1185">Reference proteome</keyword>
<keyword id="KW-0677">Repeat</keyword>
<accession>P0ABI1</accession>
<accession>P15716</accession>
<accession>P77686</accession>
<organism>
    <name type="scientific">Escherichia coli O157:H7</name>
    <dbReference type="NCBI Taxonomy" id="83334"/>
    <lineage>
        <taxon>Bacteria</taxon>
        <taxon>Pseudomonadati</taxon>
        <taxon>Pseudomonadota</taxon>
        <taxon>Gammaproteobacteria</taxon>
        <taxon>Enterobacterales</taxon>
        <taxon>Enterobacteriaceae</taxon>
        <taxon>Escherichia</taxon>
    </lineage>
</organism>